<keyword id="KW-0002">3D-structure</keyword>
<keyword id="KW-0025">Alternative splicing</keyword>
<keyword id="KW-0053">Apoptosis</keyword>
<keyword id="KW-0067">ATP-binding</keyword>
<keyword id="KW-1003">Cell membrane</keyword>
<keyword id="KW-0963">Cytoplasm</keyword>
<keyword id="KW-0391">Immunity</keyword>
<keyword id="KW-0399">Innate immunity</keyword>
<keyword id="KW-0433">Leucine-rich repeat</keyword>
<keyword id="KW-0449">Lipoprotein</keyword>
<keyword id="KW-0472">Membrane</keyword>
<keyword id="KW-0547">Nucleotide-binding</keyword>
<keyword id="KW-0564">Palmitate</keyword>
<keyword id="KW-1267">Proteomics identification</keyword>
<keyword id="KW-1185">Reference proteome</keyword>
<keyword id="KW-0677">Repeat</keyword>
<keyword id="KW-0832">Ubl conjugation</keyword>
<reference key="1">
    <citation type="journal article" date="1999" name="J. Biol. Chem.">
        <title>Human CARD4 protein is a novel CED-4/Apaf-1 cell death family member that activates NF-kappaB.</title>
        <authorList>
            <person name="Bertin J."/>
            <person name="Nir W.-J."/>
            <person name="Fischer C.M."/>
            <person name="Tayber O.V."/>
            <person name="Errada P.R."/>
            <person name="Grant J.R."/>
            <person name="Keilty J.J."/>
            <person name="Gosselin M.L."/>
            <person name="Robison K.E."/>
            <person name="Wong G.H.W."/>
            <person name="Glucksmann M.A."/>
            <person name="DiStefano P.S."/>
        </authorList>
    </citation>
    <scope>NUCLEOTIDE SEQUENCE [MRNA] (ISOFORM 1)</scope>
    <scope>TISSUE SPECIFICITY</scope>
    <source>
        <tissue>Endothelial cell</tissue>
    </source>
</reference>
<reference key="2">
    <citation type="journal article" date="1999" name="J. Biol. Chem.">
        <title>Nod1, an Apaf-1-like activator of caspase-9 and nuclear factor-kappaB.</title>
        <authorList>
            <person name="Inohara N."/>
            <person name="Koseki T."/>
            <person name="del Peso L."/>
            <person name="Hu Y."/>
            <person name="Yee C."/>
            <person name="Chen S."/>
            <person name="Carrio R."/>
            <person name="Merino J."/>
            <person name="Liu D."/>
            <person name="Ni J."/>
            <person name="Nunez G."/>
        </authorList>
    </citation>
    <scope>NUCLEOTIDE SEQUENCE [GENOMIC DNA / MRNA] (ISOFORM 1)</scope>
    <scope>MUTAGENESIS OF VAL-41 AND LYS-208</scope>
    <source>
        <tissue>Mammary gland</tissue>
    </source>
</reference>
<reference key="3">
    <citation type="journal article" date="2004" name="Nat. Genet.">
        <title>Complete sequencing and characterization of 21,243 full-length human cDNAs.</title>
        <authorList>
            <person name="Ota T."/>
            <person name="Suzuki Y."/>
            <person name="Nishikawa T."/>
            <person name="Otsuki T."/>
            <person name="Sugiyama T."/>
            <person name="Irie R."/>
            <person name="Wakamatsu A."/>
            <person name="Hayashi K."/>
            <person name="Sato H."/>
            <person name="Nagai K."/>
            <person name="Kimura K."/>
            <person name="Makita H."/>
            <person name="Sekine M."/>
            <person name="Obayashi M."/>
            <person name="Nishi T."/>
            <person name="Shibahara T."/>
            <person name="Tanaka T."/>
            <person name="Ishii S."/>
            <person name="Yamamoto J."/>
            <person name="Saito K."/>
            <person name="Kawai Y."/>
            <person name="Isono Y."/>
            <person name="Nakamura Y."/>
            <person name="Nagahari K."/>
            <person name="Murakami K."/>
            <person name="Yasuda T."/>
            <person name="Iwayanagi T."/>
            <person name="Wagatsuma M."/>
            <person name="Shiratori A."/>
            <person name="Sudo H."/>
            <person name="Hosoiri T."/>
            <person name="Kaku Y."/>
            <person name="Kodaira H."/>
            <person name="Kondo H."/>
            <person name="Sugawara M."/>
            <person name="Takahashi M."/>
            <person name="Kanda K."/>
            <person name="Yokoi T."/>
            <person name="Furuya T."/>
            <person name="Kikkawa E."/>
            <person name="Omura Y."/>
            <person name="Abe K."/>
            <person name="Kamihara K."/>
            <person name="Katsuta N."/>
            <person name="Sato K."/>
            <person name="Tanikawa M."/>
            <person name="Yamazaki M."/>
            <person name="Ninomiya K."/>
            <person name="Ishibashi T."/>
            <person name="Yamashita H."/>
            <person name="Murakawa K."/>
            <person name="Fujimori K."/>
            <person name="Tanai H."/>
            <person name="Kimata M."/>
            <person name="Watanabe M."/>
            <person name="Hiraoka S."/>
            <person name="Chiba Y."/>
            <person name="Ishida S."/>
            <person name="Ono Y."/>
            <person name="Takiguchi S."/>
            <person name="Watanabe S."/>
            <person name="Yosida M."/>
            <person name="Hotuta T."/>
            <person name="Kusano J."/>
            <person name="Kanehori K."/>
            <person name="Takahashi-Fujii A."/>
            <person name="Hara H."/>
            <person name="Tanase T.-O."/>
            <person name="Nomura Y."/>
            <person name="Togiya S."/>
            <person name="Komai F."/>
            <person name="Hara R."/>
            <person name="Takeuchi K."/>
            <person name="Arita M."/>
            <person name="Imose N."/>
            <person name="Musashino K."/>
            <person name="Yuuki H."/>
            <person name="Oshima A."/>
            <person name="Sasaki N."/>
            <person name="Aotsuka S."/>
            <person name="Yoshikawa Y."/>
            <person name="Matsunawa H."/>
            <person name="Ichihara T."/>
            <person name="Shiohata N."/>
            <person name="Sano S."/>
            <person name="Moriya S."/>
            <person name="Momiyama H."/>
            <person name="Satoh N."/>
            <person name="Takami S."/>
            <person name="Terashima Y."/>
            <person name="Suzuki O."/>
            <person name="Nakagawa S."/>
            <person name="Senoh A."/>
            <person name="Mizoguchi H."/>
            <person name="Goto Y."/>
            <person name="Shimizu F."/>
            <person name="Wakebe H."/>
            <person name="Hishigaki H."/>
            <person name="Watanabe T."/>
            <person name="Sugiyama A."/>
            <person name="Takemoto M."/>
            <person name="Kawakami B."/>
            <person name="Yamazaki M."/>
            <person name="Watanabe K."/>
            <person name="Kumagai A."/>
            <person name="Itakura S."/>
            <person name="Fukuzumi Y."/>
            <person name="Fujimori Y."/>
            <person name="Komiyama M."/>
            <person name="Tashiro H."/>
            <person name="Tanigami A."/>
            <person name="Fujiwara T."/>
            <person name="Ono T."/>
            <person name="Yamada K."/>
            <person name="Fujii Y."/>
            <person name="Ozaki K."/>
            <person name="Hirao M."/>
            <person name="Ohmori Y."/>
            <person name="Kawabata A."/>
            <person name="Hikiji T."/>
            <person name="Kobatake N."/>
            <person name="Inagaki H."/>
            <person name="Ikema Y."/>
            <person name="Okamoto S."/>
            <person name="Okitani R."/>
            <person name="Kawakami T."/>
            <person name="Noguchi S."/>
            <person name="Itoh T."/>
            <person name="Shigeta K."/>
            <person name="Senba T."/>
            <person name="Matsumura K."/>
            <person name="Nakajima Y."/>
            <person name="Mizuno T."/>
            <person name="Morinaga M."/>
            <person name="Sasaki M."/>
            <person name="Togashi T."/>
            <person name="Oyama M."/>
            <person name="Hata H."/>
            <person name="Watanabe M."/>
            <person name="Komatsu T."/>
            <person name="Mizushima-Sugano J."/>
            <person name="Satoh T."/>
            <person name="Shirai Y."/>
            <person name="Takahashi Y."/>
            <person name="Nakagawa K."/>
            <person name="Okumura K."/>
            <person name="Nagase T."/>
            <person name="Nomura N."/>
            <person name="Kikuchi H."/>
            <person name="Masuho Y."/>
            <person name="Yamashita R."/>
            <person name="Nakai K."/>
            <person name="Yada T."/>
            <person name="Nakamura Y."/>
            <person name="Ohara O."/>
            <person name="Isogai T."/>
            <person name="Sugano S."/>
        </authorList>
    </citation>
    <scope>NUCLEOTIDE SEQUENCE [LARGE SCALE MRNA] (ISOFORM 2)</scope>
    <source>
        <tissue>Placenta</tissue>
    </source>
</reference>
<reference key="4">
    <citation type="journal article" date="2003" name="Nature">
        <title>The DNA sequence of human chromosome 7.</title>
        <authorList>
            <person name="Hillier L.W."/>
            <person name="Fulton R.S."/>
            <person name="Fulton L.A."/>
            <person name="Graves T.A."/>
            <person name="Pepin K.H."/>
            <person name="Wagner-McPherson C."/>
            <person name="Layman D."/>
            <person name="Maas J."/>
            <person name="Jaeger S."/>
            <person name="Walker R."/>
            <person name="Wylie K."/>
            <person name="Sekhon M."/>
            <person name="Becker M.C."/>
            <person name="O'Laughlin M.D."/>
            <person name="Schaller M.E."/>
            <person name="Fewell G.A."/>
            <person name="Delehaunty K.D."/>
            <person name="Miner T.L."/>
            <person name="Nash W.E."/>
            <person name="Cordes M."/>
            <person name="Du H."/>
            <person name="Sun H."/>
            <person name="Edwards J."/>
            <person name="Bradshaw-Cordum H."/>
            <person name="Ali J."/>
            <person name="Andrews S."/>
            <person name="Isak A."/>
            <person name="Vanbrunt A."/>
            <person name="Nguyen C."/>
            <person name="Du F."/>
            <person name="Lamar B."/>
            <person name="Courtney L."/>
            <person name="Kalicki J."/>
            <person name="Ozersky P."/>
            <person name="Bielicki L."/>
            <person name="Scott K."/>
            <person name="Holmes A."/>
            <person name="Harkins R."/>
            <person name="Harris A."/>
            <person name="Strong C.M."/>
            <person name="Hou S."/>
            <person name="Tomlinson C."/>
            <person name="Dauphin-Kohlberg S."/>
            <person name="Kozlowicz-Reilly A."/>
            <person name="Leonard S."/>
            <person name="Rohlfing T."/>
            <person name="Rock S.M."/>
            <person name="Tin-Wollam A.-M."/>
            <person name="Abbott A."/>
            <person name="Minx P."/>
            <person name="Maupin R."/>
            <person name="Strowmatt C."/>
            <person name="Latreille P."/>
            <person name="Miller N."/>
            <person name="Johnson D."/>
            <person name="Murray J."/>
            <person name="Woessner J.P."/>
            <person name="Wendl M.C."/>
            <person name="Yang S.-P."/>
            <person name="Schultz B.R."/>
            <person name="Wallis J.W."/>
            <person name="Spieth J."/>
            <person name="Bieri T.A."/>
            <person name="Nelson J.O."/>
            <person name="Berkowicz N."/>
            <person name="Wohldmann P.E."/>
            <person name="Cook L.L."/>
            <person name="Hickenbotham M.T."/>
            <person name="Eldred J."/>
            <person name="Williams D."/>
            <person name="Bedell J.A."/>
            <person name="Mardis E.R."/>
            <person name="Clifton S.W."/>
            <person name="Chissoe S.L."/>
            <person name="Marra M.A."/>
            <person name="Raymond C."/>
            <person name="Haugen E."/>
            <person name="Gillett W."/>
            <person name="Zhou Y."/>
            <person name="James R."/>
            <person name="Phelps K."/>
            <person name="Iadanoto S."/>
            <person name="Bubb K."/>
            <person name="Simms E."/>
            <person name="Levy R."/>
            <person name="Clendenning J."/>
            <person name="Kaul R."/>
            <person name="Kent W.J."/>
            <person name="Furey T.S."/>
            <person name="Baertsch R.A."/>
            <person name="Brent M.R."/>
            <person name="Keibler E."/>
            <person name="Flicek P."/>
            <person name="Bork P."/>
            <person name="Suyama M."/>
            <person name="Bailey J.A."/>
            <person name="Portnoy M.E."/>
            <person name="Torrents D."/>
            <person name="Chinwalla A.T."/>
            <person name="Gish W.R."/>
            <person name="Eddy S.R."/>
            <person name="McPherson J.D."/>
            <person name="Olson M.V."/>
            <person name="Eichler E.E."/>
            <person name="Green E.D."/>
            <person name="Waterston R.H."/>
            <person name="Wilson R.K."/>
        </authorList>
    </citation>
    <scope>NUCLEOTIDE SEQUENCE [LARGE SCALE GENOMIC DNA]</scope>
</reference>
<reference key="5">
    <citation type="journal article" date="2004" name="Genome Res.">
        <title>The status, quality, and expansion of the NIH full-length cDNA project: the Mammalian Gene Collection (MGC).</title>
        <authorList>
            <consortium name="The MGC Project Team"/>
        </authorList>
    </citation>
    <scope>NUCLEOTIDE SEQUENCE [LARGE SCALE MRNA] (ISOFORM 1)</scope>
    <scope>VARIANT HIS-447</scope>
    <source>
        <tissue>Lymph</tissue>
    </source>
</reference>
<reference key="6">
    <citation type="journal article" date="2000" name="J. Biol. Chem.">
        <title>An induced proximity model for NF-kappa B activation in the Nod1/RICK and RIP signaling pathways.</title>
        <authorList>
            <person name="Inohara N."/>
            <person name="Koseki T."/>
            <person name="Lin J."/>
            <person name="del Peso L."/>
            <person name="Lucas P.C."/>
            <person name="Chen F.F."/>
            <person name="Ogura Y."/>
            <person name="Nunez G."/>
        </authorList>
    </citation>
    <scope>FUNCTION</scope>
    <scope>SUBUNIT</scope>
    <scope>INTERACTION WITH RIPK2</scope>
</reference>
<reference key="7">
    <citation type="journal article" date="2001" name="J. Biol. Chem.">
        <title>Human Nod1 confers responsiveness to bacterial lipopolysaccharides.</title>
        <authorList>
            <person name="Inohara N."/>
            <person name="Ogura Y."/>
            <person name="Chen F.F."/>
            <person name="Muto A."/>
            <person name="Nunez G."/>
        </authorList>
    </citation>
    <scope>FUNCTION</scope>
</reference>
<reference key="8">
    <citation type="journal article" date="2003" name="J. Biol. Chem.">
        <title>Peptidoglycan molecular requirements allowing detection by Nod1 and Nod2.</title>
        <authorList>
            <person name="Girardin S.E."/>
            <person name="Travassos L.H."/>
            <person name="Herve M."/>
            <person name="Blanot D."/>
            <person name="Boneca I.G."/>
            <person name="Philpott D.J."/>
            <person name="Sansonetti P.J."/>
            <person name="Mengin-Lecreulx D."/>
        </authorList>
    </citation>
    <scope>FUNCTION</scope>
</reference>
<reference key="9">
    <citation type="journal article" date="2003" name="Nat. Immunol.">
        <title>An essential role for NOD1 in host recognition of bacterial peptidoglycan containing diaminopimelic acid.</title>
        <authorList>
            <person name="Chamaillard M."/>
            <person name="Hashimoto M."/>
            <person name="Horie Y."/>
            <person name="Masumoto J."/>
            <person name="Qiu S."/>
            <person name="Saab L."/>
            <person name="Ogura Y."/>
            <person name="Kawasaki A."/>
            <person name="Fukase K."/>
            <person name="Kusumoto S."/>
            <person name="Valvano M.A."/>
            <person name="Foster S.J."/>
            <person name="Mak T.W."/>
            <person name="Nunez G."/>
            <person name="Inohara N."/>
        </authorList>
    </citation>
    <scope>FUNCTION</scope>
</reference>
<reference key="10">
    <citation type="journal article" date="2003" name="Science">
        <title>Nod1 detects a unique muropeptide from gram-negative bacterial peptidoglycan.</title>
        <authorList>
            <person name="Girardin S.E."/>
            <person name="Boneca I.G."/>
            <person name="Carneiro L.A."/>
            <person name="Antignac A."/>
            <person name="Jehanno M."/>
            <person name="Viala J."/>
            <person name="Tedin K."/>
            <person name="Taha M.K."/>
            <person name="Labigne A."/>
            <person name="Zaehringer U."/>
            <person name="Coyle A.J."/>
            <person name="DiStefano P.S."/>
            <person name="Bertin J."/>
            <person name="Sansonetti P.J."/>
            <person name="Philpott D.J."/>
        </authorList>
    </citation>
    <scope>FUNCTION</scope>
</reference>
<reference key="11">
    <citation type="journal article" date="2004" name="EMBO J.">
        <title>Regulatory regions and critical residues of NOD2 involved in muramyl dipeptide recognition.</title>
        <authorList>
            <person name="Tanabe T."/>
            <person name="Chamaillard M."/>
            <person name="Ogura Y."/>
            <person name="Zhu L."/>
            <person name="Qiu S."/>
            <person name="Masumoto J."/>
            <person name="Ghosh P."/>
            <person name="Moran A."/>
            <person name="Predergast M.M."/>
            <person name="Tromp G."/>
            <person name="Williams C.J."/>
            <person name="Inohara N."/>
            <person name="Nunez G."/>
        </authorList>
    </citation>
    <scope>FUNCTION</scope>
    <scope>MUTAGENESIS OF LYS-208 AND ASP-284</scope>
</reference>
<reference key="12">
    <citation type="journal article" date="2005" name="EMBO Rep.">
        <title>Murine Nod1 but not its human orthologue mediates innate immune detection of tracheal cytotoxin.</title>
        <authorList>
            <person name="Magalhaes J.G."/>
            <person name="Philpott D.J."/>
            <person name="Nahori M.A."/>
            <person name="Jehanno M."/>
            <person name="Fritz J."/>
            <person name="Le Bourhis L."/>
            <person name="Viala J."/>
            <person name="Hugot J.P."/>
            <person name="Giovannini M."/>
            <person name="Bertin J."/>
            <person name="Lepoivre M."/>
            <person name="Mengin-Lecreulx D."/>
            <person name="Sansonetti P.J."/>
            <person name="Girardin S.E."/>
        </authorList>
    </citation>
    <scope>FUNCTION</scope>
</reference>
<reference key="13">
    <citation type="journal article" date="2005" name="J. Biol. Chem.">
        <title>Identification of the critical residues involved in peptidoglycan detection by Nod1.</title>
        <authorList>
            <person name="Girardin S.E."/>
            <person name="Jehanno M."/>
            <person name="Mengin-Lecreulx D."/>
            <person name="Sansonetti P.J."/>
            <person name="Alzari P.M."/>
            <person name="Philpott D.J."/>
        </authorList>
    </citation>
    <scope>FUNCTION</scope>
    <scope>FUNCTION (ISOFORM 3)</scope>
    <scope>DOMAIN</scope>
    <scope>MUTAGENESIS OF HIS-788; LYS-790; GLY-792; GLU-816; GLY-818; TRP-820 AND TRP-874</scope>
</reference>
<reference key="14">
    <citation type="journal article" date="2008" name="Cell. Microbiol.">
        <title>The pattern-recognition molecule Nod1 is localized at the plasma membrane at sites of bacterial interaction.</title>
        <authorList>
            <person name="Kufer T.A."/>
            <person name="Kremmer E."/>
            <person name="Adam A.C."/>
            <person name="Philpott D.J."/>
            <person name="Sansonetti P.J."/>
        </authorList>
    </citation>
    <scope>SUBCELLULAR LOCATION</scope>
    <scope>MUTAGENESIS OF LYS-208; ASP-711; HIS-788; GLY-792 AND GLN-877</scope>
</reference>
<reference key="15">
    <citation type="journal article" date="2008" name="PLoS Pathog.">
        <title>GEF-H1 mediated control of NOD1 dependent NF-kappaB activation by Shigella effectors.</title>
        <authorList>
            <person name="Fukazawa A."/>
            <person name="Alonso C."/>
            <person name="Kurachi K."/>
            <person name="Gupta S."/>
            <person name="Lesser C.F."/>
            <person name="McCormick B.A."/>
            <person name="Reinecker H.C."/>
        </authorList>
    </citation>
    <scope>FUNCTION</scope>
    <scope>SUBCELLULAR LOCATION</scope>
    <scope>INTERACTION WITH ARHGEF2</scope>
</reference>
<reference key="16">
    <citation type="journal article" date="2012" name="Cell. Microbiol.">
        <title>NLRP10 enhances Shigella-induced pro-inflammatory responses.</title>
        <authorList>
            <person name="Lautz K."/>
            <person name="Damm A."/>
            <person name="Menning M."/>
            <person name="Wenger J."/>
            <person name="Adam A.C."/>
            <person name="Zigrino P."/>
            <person name="Kremmer E."/>
            <person name="Kufer T.A."/>
        </authorList>
    </citation>
    <scope>FUNCTION</scope>
    <scope>INTERACTION WITH NLRP10</scope>
    <scope>MUTAGENESIS OF LYS-208 AND ASP-287</scope>
</reference>
<reference key="17">
    <citation type="journal article" date="2013" name="J. Biol. Chem.">
        <title>Ubiquitin regulates caspase recruitment domain-mediated signaling by nucleotide-binding oligomerization domain-containing proteins NOD1 and NOD2.</title>
        <authorList>
            <person name="Ver Heul A.M."/>
            <person name="Fowler C.A."/>
            <person name="Ramaswamy S."/>
            <person name="Piper R.C."/>
        </authorList>
    </citation>
    <scope>UBIQUITIN-BINDING</scope>
    <scope>INTERACTION WITH RIPK2</scope>
    <scope>MUTAGENESIS OF ARG-69 AND 84-GLU--TYR-88</scope>
</reference>
<reference key="18">
    <citation type="journal article" date="2014" name="Cell. Physiol. Biochem.">
        <title>The E3 ligase RNF34 is a novel negative regulator of the NOD1 pathway.</title>
        <authorList>
            <person name="Zhang R."/>
            <person name="Zhao J."/>
            <person name="Song Y."/>
            <person name="Wang X."/>
            <person name="Wang L."/>
            <person name="Xu J."/>
            <person name="Song C."/>
            <person name="Liu F."/>
        </authorList>
    </citation>
    <scope>UBIQUITINATION BY RNF34</scope>
</reference>
<reference key="19">
    <citation type="journal article" date="2016" name="J. Virol.">
        <title>NOD1 Participates in the Innate Immune Response Triggered by Hepatitis C Virus Polymerase.</title>
        <authorList>
            <person name="Vegna S."/>
            <person name="Gregoire D."/>
            <person name="Moreau M."/>
            <person name="Lassus P."/>
            <person name="Durantel D."/>
            <person name="Assenat E."/>
            <person name="Hibner U."/>
            <person name="Simonin Y."/>
        </authorList>
    </citation>
    <scope>FUNCTION</scope>
</reference>
<reference key="20">
    <citation type="journal article" date="2016" name="Nature">
        <title>NOD1 and NOD2 signalling links ER stress with inflammation.</title>
        <authorList>
            <person name="Keestra-Gounder A.M."/>
            <person name="Byndloss M.X."/>
            <person name="Seyffert N."/>
            <person name="Young B.M."/>
            <person name="Chavez-Arroyo A."/>
            <person name="Tsai A.Y."/>
            <person name="Cevallos S.A."/>
            <person name="Winter M.G."/>
            <person name="Pham O.H."/>
            <person name="Tiffany C.R."/>
            <person name="de Jong M.F."/>
            <person name="Kerrinnes T."/>
            <person name="Ravindran R."/>
            <person name="Luciw P.A."/>
            <person name="McSorley S.J."/>
            <person name="Baeumler A.J."/>
            <person name="Tsolis R.M."/>
        </authorList>
    </citation>
    <scope>FUNCTION</scope>
</reference>
<reference key="21">
    <citation type="journal article" date="2018" name="Nat. Commun.">
        <title>Structural basis of RIP2 activation and signaling.</title>
        <authorList>
            <person name="Gong Q."/>
            <person name="Long Z."/>
            <person name="Zhong F.L."/>
            <person name="Teo D.E.T."/>
            <person name="Jin Y."/>
            <person name="Yin Z."/>
            <person name="Boo Z.Z."/>
            <person name="Zhang Y."/>
            <person name="Zhang J."/>
            <person name="Yang R."/>
            <person name="Bhushan S."/>
            <person name="Reversade B."/>
            <person name="Li Z."/>
            <person name="Wu B."/>
        </authorList>
    </citation>
    <scope>INTERACTION WITH RIPK2</scope>
</reference>
<reference key="22">
    <citation type="journal article" date="2019" name="Science">
        <title>Palmitoylation of NOD1 and NOD2 is required for bacterial sensing.</title>
        <authorList>
            <person name="Lu Y."/>
            <person name="Zheng Y."/>
            <person name="Coyaud E."/>
            <person name="Zhang C."/>
            <person name="Selvabaskaran A."/>
            <person name="Yu Y."/>
            <person name="Xu Z."/>
            <person name="Weng X."/>
            <person name="Chen J.S."/>
            <person name="Meng Y."/>
            <person name="Warner N."/>
            <person name="Cheng X."/>
            <person name="Liu Y."/>
            <person name="Yao B."/>
            <person name="Hu H."/>
            <person name="Xia Z."/>
            <person name="Muise A.M."/>
            <person name="Klip A."/>
            <person name="Brumell J.H."/>
            <person name="Girardin S.E."/>
            <person name="Ying S."/>
            <person name="Fairn G.D."/>
            <person name="Raught B."/>
            <person name="Sun Q."/>
            <person name="Neculai D."/>
        </authorList>
    </citation>
    <scope>PALMITOYLATION AT CYS-558; CYS-567 AND CYS-952</scope>
    <scope>SUBCELLULAR LOCATION</scope>
    <scope>MUTAGENESIS OF CYS-558; CYS-567 AND CYS-952</scope>
</reference>
<reference key="23">
    <citation type="journal article" date="2020" name="J. Immunol.">
        <title>NOD1 Promotes Antiviral Signaling by Binding Viral RNA and Regulating the Interaction of MDA5 and MAVS.</title>
        <authorList>
            <person name="Wu X.M."/>
            <person name="Zhang J."/>
            <person name="Li P.W."/>
            <person name="Hu Y.W."/>
            <person name="Cao L."/>
            <person name="Ouyang S."/>
            <person name="Bi Y.H."/>
            <person name="Nie P."/>
            <person name="Chang M.X."/>
        </authorList>
    </citation>
    <scope>FUNCTION</scope>
    <scope>INTERACTION WITH IFIH1</scope>
    <scope>SUBCELLULAR LOCATION</scope>
</reference>
<reference key="24">
    <citation type="journal article" date="2021" name="EMBO J.">
        <title>Cellular stress promotes NOD1/2-dependent inflammation via the endogenous metabolite sphingosine-1-phosphate.</title>
        <authorList>
            <person name="Pei G."/>
            <person name="Zyla J."/>
            <person name="He L."/>
            <person name="Moura-Alves P."/>
            <person name="Steinle H."/>
            <person name="Saikali P."/>
            <person name="Lozza L."/>
            <person name="Nieuwenhuizen N."/>
            <person name="Weiner J."/>
            <person name="Mollenkopf H.J."/>
            <person name="Ellwanger K."/>
            <person name="Arnold C."/>
            <person name="Duan M."/>
            <person name="Dagil Y."/>
            <person name="Pashenkov M."/>
            <person name="Boneca I.G."/>
            <person name="Kufer T.A."/>
            <person name="Dorhoi A."/>
            <person name="Kaufmann S.H."/>
        </authorList>
    </citation>
    <scope>FUNCTION</scope>
    <scope>MUTAGENESIS OF HIS-517</scope>
</reference>
<reference key="25">
    <citation type="journal article" date="2022" name="EMBO J.">
        <title>Selective autophagy of RIPosomes maintains innate immune homeostasis during bacterial infection.</title>
        <authorList>
            <person name="Mehto S."/>
            <person name="Jena K.K."/>
            <person name="Yadav R."/>
            <person name="Priyadarsini S."/>
            <person name="Samal P."/>
            <person name="Krishna S."/>
            <person name="Dhar K."/>
            <person name="Jain A."/>
            <person name="Chauhan N.R."/>
            <person name="Murmu K.C."/>
            <person name="Bal R."/>
            <person name="Sahu R."/>
            <person name="Jaiswal P."/>
            <person name="Sahoo B.S."/>
            <person name="Patnaik S."/>
            <person name="Kufer T.A."/>
            <person name="Rusten T.E."/>
            <person name="Chauhan S."/>
            <person name="Prasad P."/>
            <person name="Chauhan S."/>
        </authorList>
    </citation>
    <scope>INTERACTION WITH IRGM</scope>
    <scope>PROTEIN DEGRADATION</scope>
</reference>
<reference key="26">
    <citation type="submission" date="2006-12" db="PDB data bank">
        <title>Solution structure of the CARD domain in human caspase recruitment domain protein 4 (NOD1 protein).</title>
        <authorList>
            <consortium name="RIKEN structural genomics initiative (RSGI)"/>
        </authorList>
    </citation>
    <scope>STRUCTURE BY NMR OF 14-110</scope>
</reference>
<reference key="27">
    <citation type="journal article" date="2007" name="Biochem. Biophys. Res. Commun.">
        <title>Crystal structure of the Nod1 caspase activation and recruitment domain.</title>
        <authorList>
            <person name="Coussens N.P."/>
            <person name="Mowers J.C."/>
            <person name="McDonald C."/>
            <person name="Nunez G."/>
            <person name="Ramaswamy S."/>
        </authorList>
    </citation>
    <scope>X-RAY CRYSTALLOGRAPHY (2.0 ANGSTROMS) OF 16-108</scope>
    <scope>SUBUNIT</scope>
</reference>
<reference key="28">
    <citation type="journal article" date="2007" name="J. Mol. Biol.">
        <title>Solution structure of NOD1 CARD and mutational analysis of its interaction with the CARD of downstream kinase RICK.</title>
        <authorList>
            <person name="Manon F."/>
            <person name="Favier A."/>
            <person name="Nunez G."/>
            <person name="Simorre J.P."/>
            <person name="Cusack S."/>
        </authorList>
    </citation>
    <scope>STRUCTURE BY NMR OF 15-138</scope>
    <scope>FUNCTION</scope>
    <scope>INTERACTION WITH RIPK2</scope>
    <scope>MUTAGENESIS OF VAL-41; LEU-44; ASP-48; GLU-53; ASP-54; GLU-56 AND ARG-69</scope>
</reference>
<reference key="29">
    <citation type="journal article" date="2008" name="Biochemistry">
        <title>Monomer/dimer transition of the caspase-recruitment domain of human Nod1.</title>
        <authorList>
            <person name="Srimathi T."/>
            <person name="Robbins S.L."/>
            <person name="Dubas R.L."/>
            <person name="Hasegawa M."/>
            <person name="Inohara N."/>
            <person name="Park Y.C."/>
        </authorList>
    </citation>
    <scope>X-RAY CRYSTALLOGRAPHY (1.9 ANGSTROMS) OF 9-106</scope>
    <scope>SUBUNIT</scope>
</reference>
<reference evidence="39" key="30">
    <citation type="journal article" date="2014" name="PLoS ONE">
        <title>Crystal structure of a complex of NOD1 CARD and ubiquitin.</title>
        <authorList>
            <person name="Ver Heul A.M."/>
            <person name="Gakhar L."/>
            <person name="Piper R.C."/>
            <person name="Subramanian R."/>
        </authorList>
    </citation>
    <scope>X-RAY CRYSTALLOGRAPHY (2.90 ANGSTROMS) OF 16-108 IN COMPLEX WITH UBIQUITIN</scope>
    <scope>SUBUNIT</scope>
</reference>
<feature type="chain" id="PRO_0000144077" description="Nucleotide-binding oligomerization domain-containing protein 1">
    <location>
        <begin position="1"/>
        <end position="953"/>
    </location>
</feature>
<feature type="domain" description="CARD" evidence="2">
    <location>
        <begin position="15"/>
        <end position="105"/>
    </location>
</feature>
<feature type="domain" description="NACHT" evidence="3">
    <location>
        <begin position="196"/>
        <end position="531"/>
    </location>
</feature>
<feature type="repeat" description="LRR 1">
    <location>
        <begin position="632"/>
        <end position="656"/>
    </location>
</feature>
<feature type="repeat" description="LRR 2">
    <location>
        <begin position="702"/>
        <end position="725"/>
    </location>
</feature>
<feature type="repeat" description="LRR 3">
    <location>
        <begin position="727"/>
        <end position="750"/>
    </location>
</feature>
<feature type="repeat" description="LRR 4">
    <location>
        <begin position="755"/>
        <end position="778"/>
    </location>
</feature>
<feature type="repeat" description="LRR 5">
    <location>
        <begin position="783"/>
        <end position="806"/>
    </location>
</feature>
<feature type="repeat" description="LRR 6">
    <location>
        <begin position="839"/>
        <end position="862"/>
    </location>
</feature>
<feature type="repeat" description="LRR 7">
    <location>
        <begin position="867"/>
        <end position="891"/>
    </location>
</feature>
<feature type="repeat" description="LRR 8">
    <location>
        <begin position="895"/>
        <end position="918"/>
    </location>
</feature>
<feature type="repeat" description="LRR 9">
    <location>
        <begin position="923"/>
        <end position="946"/>
    </location>
</feature>
<feature type="binding site" evidence="3">
    <location>
        <begin position="202"/>
        <end position="209"/>
    </location>
    <ligand>
        <name>ATP</name>
        <dbReference type="ChEBI" id="CHEBI:30616"/>
    </ligand>
</feature>
<feature type="lipid moiety-binding region" description="S-palmitoyl cysteine" evidence="37">
    <location>
        <position position="558"/>
    </location>
</feature>
<feature type="lipid moiety-binding region" description="S-palmitoyl cysteine" evidence="37">
    <location>
        <position position="567"/>
    </location>
</feature>
<feature type="lipid moiety-binding region" description="S-palmitoyl cysteine" evidence="37">
    <location>
        <position position="952"/>
    </location>
</feature>
<feature type="splice variant" id="VSP_055825" description="In isoform 2." evidence="33">
    <original>GETIFILGDAGVGKSMLLQRLQSLWATGRLDAGVKFFFHFRCRMFSCFKESDRLC</original>
    <variation>AASRKVTGCVCRTCSSSTTATQSGTPRRCLPSCCASPTWPSSPSMAWTSCTRTWT</variation>
    <location>
        <begin position="195"/>
        <end position="249"/>
    </location>
</feature>
<feature type="splice variant" id="VSP_055826" description="In isoform 2." evidence="33">
    <location>
        <begin position="250"/>
        <end position="953"/>
    </location>
</feature>
<feature type="splice variant" id="VSP_061942" description="In isoform 3.">
    <location>
        <begin position="819"/>
        <end position="846"/>
    </location>
</feature>
<feature type="sequence variant" id="VAR_020371" description="In dbSNP:rs2075820.">
    <original>E</original>
    <variation>K</variation>
    <location>
        <position position="266"/>
    </location>
</feature>
<feature type="sequence variant" id="VAR_053624" description="In dbSNP:rs5743342.">
    <original>D</original>
    <variation>N</variation>
    <location>
        <position position="372"/>
    </location>
</feature>
<feature type="sequence variant" id="VAR_053625" description="In dbSNP:rs2975634." evidence="12">
    <original>R</original>
    <variation>H</variation>
    <location>
        <position position="447"/>
    </location>
</feature>
<feature type="sequence variant" id="VAR_053626" description="In dbSNP:rs5743345.">
    <original>R</original>
    <variation>W</variation>
    <location>
        <position position="605"/>
    </location>
</feature>
<feature type="sequence variant" id="VAR_053627" description="In dbSNP:rs5743346.">
    <original>A</original>
    <variation>T</variation>
    <location>
        <position position="610"/>
    </location>
</feature>
<feature type="mutagenesis site" description="Abolishes interaction with RIPK2/RICK." evidence="5 15">
    <original>V</original>
    <variation>A</variation>
    <location>
        <position position="41"/>
    </location>
</feature>
<feature type="mutagenesis site" description="Abolishes caspase-9 activation." evidence="5 15">
    <original>V</original>
    <variation>Q</variation>
    <location>
        <position position="41"/>
    </location>
</feature>
<feature type="mutagenesis site" description="Abolishes activation of NF-kappa-B. No effect on interaction with RIPK2." evidence="15">
    <original>L</original>
    <variation>A</variation>
    <location>
        <position position="44"/>
    </location>
</feature>
<feature type="mutagenesis site" description="Abolishes activation of NF-kappa-B. No effect on interaction with RIPK2." evidence="15">
    <original>D</original>
    <variation>K</variation>
    <location>
        <position position="48"/>
    </location>
</feature>
<feature type="mutagenesis site" description="No effect on activation of NF-kappa-B. Abolishes interaction with RIPK2." evidence="15">
    <original>E</original>
    <variation>K</variation>
    <location>
        <position position="53"/>
    </location>
</feature>
<feature type="mutagenesis site" description="Abolishes activation of NF-kappa-B. Abolishes interaction with RIPK2." evidence="15">
    <original>D</original>
    <variation>K</variation>
    <location>
        <position position="54"/>
    </location>
</feature>
<feature type="mutagenesis site" description="Abolishes activation of NF-kappa-B. Abolishes interaction with RIPK2." evidence="15">
    <original>E</original>
    <variation>K</variation>
    <location>
        <position position="56"/>
    </location>
</feature>
<feature type="mutagenesis site" description="Abolishes activation of NF-kappa-B. Abolished interaction with ubiquitin and RIPK2." evidence="15 21">
    <original>R</original>
    <variation>E</variation>
    <location>
        <position position="69"/>
    </location>
</feature>
<feature type="mutagenesis site" description="Abolished interaction with ubiquitin without affecting interaction with RIPK2." evidence="21">
    <original>EFFLY</original>
    <variation>AFFLR</variation>
    <location>
        <begin position="84"/>
        <end position="88"/>
    </location>
</feature>
<feature type="mutagenesis site" description="Reduces caspase-9 activation. Reduced binding affinity for NLRP10. Does not associate with cell membrane. Reduced NF-kappa-B activation in response to ligand binding." evidence="5 11 17 20">
    <original>K</original>
    <variation>R</variation>
    <location>
        <position position="208"/>
    </location>
</feature>
<feature type="mutagenesis site" description="Reduced NF-kappa-B activation in response to ligand binding." evidence="11">
    <original>D</original>
    <variation>A</variation>
    <location>
        <position position="284"/>
    </location>
</feature>
<feature type="mutagenesis site" description="Reduced binding affinity for NLRP10." evidence="20">
    <original>D</original>
    <variation>A</variation>
    <location>
        <position position="287"/>
    </location>
</feature>
<feature type="mutagenesis site" description="Loss of activation by sphingosine-1-phosphate." evidence="29">
    <original>H</original>
    <variation>A</variation>
    <location>
        <position position="517"/>
    </location>
</feature>
<feature type="mutagenesis site" description="Strongly reduced palmitoylation and localization to the cell membrane; when associated with S-567 and S-952." evidence="27">
    <original>C</original>
    <variation>S</variation>
    <location>
        <position position="558"/>
    </location>
</feature>
<feature type="mutagenesis site" description="Strongly reduced palmitoylation and localization to the cell membrane; when associated with S-558 and S-952." evidence="27">
    <original>C</original>
    <variation>S</variation>
    <location>
        <position position="567"/>
    </location>
</feature>
<feature type="mutagenesis site" description="Does not associate with cell membrane." evidence="17">
    <original>D</original>
    <variation>S</variation>
    <location>
        <position position="711"/>
    </location>
</feature>
<feature type="mutagenesis site" description="No effect on association with cell membrane. Reduced binding to gamma-D-glutamyl-meso-diaminopimelic acid (iE-DAP)." evidence="13 17">
    <original>H</original>
    <variation>S</variation>
    <location>
        <position position="788"/>
    </location>
</feature>
<feature type="mutagenesis site" description="Reduced binding to gamma-D-glutamyl-meso-diaminopimelic acid (iE-DAP)." evidence="13">
    <original>K</original>
    <variation>T</variation>
    <location>
        <position position="790"/>
    </location>
</feature>
<feature type="mutagenesis site" description="Does not associate with cell membrane. Reduced binding to gamma-D-glutamyl-meso-diaminopimelic acid (iE-DAP)." evidence="13 17">
    <original>G</original>
    <variation>S</variation>
    <location>
        <position position="792"/>
    </location>
</feature>
<feature type="mutagenesis site" description="Increased binding to gamma-D-glutamyl-meso-diaminopimelic acid (iE-DAP) in tetrapeptide-containing muropeptides (MurNAc-TetraDAP or TetraDAP)." evidence="13">
    <original>E</original>
    <variation>D</variation>
    <location>
        <position position="816"/>
    </location>
</feature>
<feature type="mutagenesis site" description="Reduced binding to gamma-D-glutamyl-meso-diaminopimelic acid (iE-DAP)." evidence="13">
    <original>E</original>
    <variation>S</variation>
    <location>
        <position position="816"/>
    </location>
</feature>
<feature type="mutagenesis site" description="Reduced binding to gamma-D-glutamyl-meso-diaminopimelic acid (iE-DAP)." evidence="13">
    <original>G</original>
    <variation>S</variation>
    <location>
        <position position="818"/>
    </location>
</feature>
<feature type="mutagenesis site" description="Reduced binding to gamma-D-glutamyl-meso-diaminopimelic acid (iE-DAP)." evidence="13">
    <original>W</original>
    <variation>S</variation>
    <location>
        <position position="820"/>
    </location>
</feature>
<feature type="mutagenesis site" description="Reduced binding to gamma-D-glutamyl-meso-diaminopimelic acid (iE-DAP)." evidence="13">
    <original>W</original>
    <variation>S</variation>
    <location>
        <position position="874"/>
    </location>
</feature>
<feature type="mutagenesis site" description="Does not associate with cell membrane." evidence="17">
    <original>Q</original>
    <variation>S</variation>
    <location>
        <position position="877"/>
    </location>
</feature>
<feature type="mutagenesis site" description="Strongly reduced palmitoylation and localization to the cell membrane; when associated with S-558 and S-567." evidence="27">
    <original>C</original>
    <variation>S</variation>
    <location>
        <position position="952"/>
    </location>
</feature>
<feature type="helix" evidence="40">
    <location>
        <begin position="18"/>
        <end position="25"/>
    </location>
</feature>
<feature type="helix" evidence="40">
    <location>
        <begin position="27"/>
        <end position="33"/>
    </location>
</feature>
<feature type="helix" evidence="40">
    <location>
        <begin position="38"/>
        <end position="46"/>
    </location>
</feature>
<feature type="helix" evidence="40">
    <location>
        <begin position="52"/>
        <end position="59"/>
    </location>
</feature>
<feature type="strand" evidence="41">
    <location>
        <begin position="61"/>
        <end position="63"/>
    </location>
</feature>
<feature type="helix" evidence="40">
    <location>
        <begin position="64"/>
        <end position="78"/>
    </location>
</feature>
<feature type="helix" evidence="40">
    <location>
        <begin position="80"/>
        <end position="95"/>
    </location>
</feature>
<feature type="helix" evidence="40">
    <location>
        <begin position="98"/>
        <end position="100"/>
    </location>
</feature>
<feature type="helix" evidence="40">
    <location>
        <begin position="101"/>
        <end position="105"/>
    </location>
</feature>
<sequence>MEEQGHSEMEIIPSESHPHIQLLKSNRELLVTHIRNTQCLVDNLLKNDYFSAEDAEIVCACPTQPDKVRKILDLVQSKGEEVSEFFLYLLQQLADAYVDLRPWLLEIGFSPSLLTQSKVVVNTDPVSRYTQQLRHHLGRDSKFVLCYAQKEELLLEEIYMDTIMELVGFSNESLGSLNSLACLLDHTTGILNEQGETIFILGDAGVGKSMLLQRLQSLWATGRLDAGVKFFFHFRCRMFSCFKESDRLCLQDLLFKHYCYPERDPEEVFAFLLRFPHVALFTFDGLDELHSDLDLSRVPDSSCPWEPAHPLVLLANLLSGKLLKGASKLLTARTGIEVPRQFLRKKVLLRGFSPSHLRAYARRMFPERALQDRLLSQLEANPNLCSLCSVPLFCWIIFRCFQHFRAAFEGSPQLPDCTMTLTDVFLLVTEVHLNRMQPSSLVQRNTRSPVETLHAGRDTLCSLGQVAHRGMEKSLFVFTQEEVQASGLQERDMQLGFLRALPELGPGGDQQSYEFFHLTLQAFFTAFFLVLDDRVGTQELLRFFQEWMPPAGAATTSCYPPFLPFQCLQGSGPAREDLFKNKDHFQFTNLFLCGLLSKAKQKLLRHLVPAAALRRKRKALWAHLFSSLRGYLKSLPRVQVESFNQVQAMPTFIWMLRCIYETQSQKVGQLAARGICANYLKLTYCNACSADCSALSFVLHHFPKRLALDLDNNNLNDYGVRELQPCFSRLTVLRLSVNQITDGGVKVLSEELTKYKIVTYLGLYNNQITDVGARYVTKILDECKGLTHLKLGKNKITSEGGKYLALAVKNSKSISEVGMWGNQVGDEGAKAFAEALRNHPSLTTLSLASNGISTEGGKSLARALQQNTSLEILWLTQNELNDEVAESLAEMLKVNQTLKHLWLIQNQITAKGTAQLADALQSNTGITEICLNGNLIKPEEAKVYEDEKRIICF</sequence>
<evidence type="ECO:0000250" key="1">
    <source>
        <dbReference type="UniProtKB" id="Q8BHB0"/>
    </source>
</evidence>
<evidence type="ECO:0000255" key="2">
    <source>
        <dbReference type="PROSITE-ProRule" id="PRU00046"/>
    </source>
</evidence>
<evidence type="ECO:0000255" key="3">
    <source>
        <dbReference type="PROSITE-ProRule" id="PRU00136"/>
    </source>
</evidence>
<evidence type="ECO:0000269" key="4">
    <source>
    </source>
</evidence>
<evidence type="ECO:0000269" key="5">
    <source>
    </source>
</evidence>
<evidence type="ECO:0000269" key="6">
    <source>
    </source>
</evidence>
<evidence type="ECO:0000269" key="7">
    <source>
    </source>
</evidence>
<evidence type="ECO:0000269" key="8">
    <source>
    </source>
</evidence>
<evidence type="ECO:0000269" key="9">
    <source>
    </source>
</evidence>
<evidence type="ECO:0000269" key="10">
    <source>
    </source>
</evidence>
<evidence type="ECO:0000269" key="11">
    <source>
    </source>
</evidence>
<evidence type="ECO:0000269" key="12">
    <source>
    </source>
</evidence>
<evidence type="ECO:0000269" key="13">
    <source>
    </source>
</evidence>
<evidence type="ECO:0000269" key="14">
    <source>
    </source>
</evidence>
<evidence type="ECO:0000269" key="15">
    <source>
    </source>
</evidence>
<evidence type="ECO:0000269" key="16">
    <source>
    </source>
</evidence>
<evidence type="ECO:0000269" key="17">
    <source>
    </source>
</evidence>
<evidence type="ECO:0000269" key="18">
    <source>
    </source>
</evidence>
<evidence type="ECO:0000269" key="19">
    <source>
    </source>
</evidence>
<evidence type="ECO:0000269" key="20">
    <source>
    </source>
</evidence>
<evidence type="ECO:0000269" key="21">
    <source>
    </source>
</evidence>
<evidence type="ECO:0000269" key="22">
    <source>
    </source>
</evidence>
<evidence type="ECO:0000269" key="23">
    <source>
    </source>
</evidence>
<evidence type="ECO:0000269" key="24">
    <source>
    </source>
</evidence>
<evidence type="ECO:0000269" key="25">
    <source>
    </source>
</evidence>
<evidence type="ECO:0000269" key="26">
    <source>
    </source>
</evidence>
<evidence type="ECO:0000269" key="27">
    <source>
    </source>
</evidence>
<evidence type="ECO:0000269" key="28">
    <source>
    </source>
</evidence>
<evidence type="ECO:0000269" key="29">
    <source>
    </source>
</evidence>
<evidence type="ECO:0000269" key="30">
    <source>
    </source>
</evidence>
<evidence type="ECO:0000303" key="31">
    <source>
    </source>
</evidence>
<evidence type="ECO:0000303" key="32">
    <source>
    </source>
</evidence>
<evidence type="ECO:0000303" key="33">
    <source>
    </source>
</evidence>
<evidence type="ECO:0000303" key="34">
    <source>
    </source>
</evidence>
<evidence type="ECO:0000303" key="35">
    <source>
    </source>
</evidence>
<evidence type="ECO:0000305" key="36"/>
<evidence type="ECO:0000305" key="37">
    <source>
    </source>
</evidence>
<evidence type="ECO:0000312" key="38">
    <source>
        <dbReference type="HGNC" id="HGNC:16390"/>
    </source>
</evidence>
<evidence type="ECO:0007744" key="39">
    <source>
        <dbReference type="PDB" id="4JQW"/>
    </source>
</evidence>
<evidence type="ECO:0007829" key="40">
    <source>
        <dbReference type="PDB" id="2NZ7"/>
    </source>
</evidence>
<evidence type="ECO:0007829" key="41">
    <source>
        <dbReference type="PDB" id="4E9M"/>
    </source>
</evidence>
<accession>Q9Y239</accession>
<accession>B4DTU3</accession>
<accession>Q549U4</accession>
<accession>Q8IWF5</accession>
<gene>
    <name evidence="32 38" type="primary">NOD1</name>
    <name evidence="31" type="synonym">CARD4</name>
</gene>
<proteinExistence type="evidence at protein level"/>
<comment type="function">
    <text evidence="1 6 7 8 9 10 11 13 14 15 19 20 24 25 28 29">Pattern recognition receptor (PRR) that detects bacterial peptidoglycan fragments and other danger signals and thus participates in both innate and adaptive immune responses (PubMed:11058605, PubMed:12791997, PubMed:12796777, PubMed:15044951, PubMed:16172124, PubMed:19043560, PubMed:22672233, PubMed:27099311). Specifically recognizes and binds gamma-D-glutamyl-meso-diaminopimelic acid (iE-DAP), a dipeptide present in peptidoglycan of Gram-negative bacteria (PubMed:12791997, PubMed:12796777, PubMed:12871942, PubMed:16172124, PubMed:16211083). Preferentially binds iE-DAP in tripeptide-containing muropeptides (MurNAc-TriDAP or TriDAP) (PubMed:16211083). Ligand binding triggers oligomerization that facilitates the binding and subsequent activation of the proximal adapter receptor-interacting RIPK2 (PubMed:12791997, PubMed:12796777, PubMed:17054981). Following recruitment, RIPK2 undergoes 'Met-1'- (linear) and 'Lys-63'-linked polyubiquitination by E3 ubiquitin-protein ligases XIAP, BIRC2, BIRC3 and the LUBAC complex, becoming a scaffolding protein for downstream effectors, triggering activation of the NF-kappa-B and MAP kinases signaling (PubMed:10880512, PubMed:12791997, PubMed:19043560). This in turn leads to the transcriptional activation of hundreds of genes involved in immune response (PubMed:10880512, PubMed:19043560). Also acts as a regulator of antiviral response elicited by dsRNA and the expression of RLR pathway members by targeting IFIH1 and TRAF3 to modulate the formation of IFIH1-MAVS and TRAF3-MAVS complexes leading to increased transcription of type I IFNs (PubMed:32169843). Also acts as a regulator of autophagy via its interaction with ATG16L1, possibly by recruiting ATG16L1 at the site of bacterial entry (By similarity). Besides recognizing pathogens, also involved in the endoplasmic reticulum stress response: acts by sensing and binding to the cytosolic metabolite sphingosine-1-phosphate generated in response to endoplasmic reticulum stress, initiating an inflammation process that leads to activation of the NF-kappa-B and MAP kinases signaling (PubMed:27007849, PubMed:33942347). In addition, plays a role in insulin trafficking in beta cells in a cell-autonomous manner (By similarity). Mechanistically, upon recognizing cognate ligands, NOD1 and RIPK2 localize to insulin vesicles where they recruit RAB1A to direct insulin trafficking through the cytoplasm (By similarity).</text>
</comment>
<comment type="function">
    <molecule>Isoform 3</molecule>
    <text evidence="13">In contrast to isoform 1, does not efficiently recognize and bind gamma-D-glutamyl-meso-diaminopimelic acid (iE-DAP) ligand.</text>
</comment>
<comment type="subunit">
    <text evidence="1 6 15 16 18 19 20 21 23 26 28 30">Homooligomer: homooligomerizes following ligand-binding, promoting RIPK2 recruitment (PubMed:10880512). Interacts (via CARD domain) with RIPK2 (via CARD domain) (PubMed:10880512, PubMed:17054981, PubMed:23300079, PubMed:30478312). Following RIPK2 recruitment, RIPK2 homooligomerizes via its CARD domain and forms long filaments named RIPosomes (PubMed:30478312). Interacts with ARHGEF2 (PubMed:19043560). Interacts (via CARD domain) with ubiquitin; inhibiting interaction with RIPK2 (PubMed:23300079, PubMed:25127239). Interacts with NLRP10 and recruits it to the cell membrane following invasive bacterial infection (PubMed:22672233). Interacts with IFIH1; this interaction promotes transcription of antiviral genes and inhibition of viral replication (PubMed:32169843). Interacts with IRGM; promoting NOD1 degradation (PubMed:36221902). Interacts with ATG16L1 (By similarity).</text>
</comment>
<comment type="interaction">
    <interactant intactId="EBI-1051262">
        <id>Q9Y239</id>
    </interactant>
    <interactant intactId="EBI-6875961">
        <id>P02489</id>
        <label>CRYAA</label>
    </interactant>
    <organismsDiffer>false</organismsDiffer>
    <experiments>3</experiments>
</comment>
<comment type="interaction">
    <interactant intactId="EBI-1051262">
        <id>Q9Y239</id>
    </interactant>
    <interactant intactId="EBI-744302">
        <id>P14136</id>
        <label>GFAP</label>
    </interactant>
    <organismsDiffer>false</organismsDiffer>
    <experiments>3</experiments>
</comment>
<comment type="interaction">
    <interactant intactId="EBI-1051262">
        <id>Q9Y239</id>
    </interactant>
    <interactant intactId="EBI-1955541">
        <id>Q53GS7</id>
        <label>GLE1</label>
    </interactant>
    <organismsDiffer>false</organismsDiffer>
    <experiments>3</experiments>
</comment>
<comment type="interaction">
    <interactant intactId="EBI-1051262">
        <id>Q9Y239</id>
    </interactant>
    <interactant intactId="EBI-466029">
        <id>P42858</id>
        <label>HTT</label>
    </interactant>
    <organismsDiffer>false</organismsDiffer>
    <experiments>9</experiments>
</comment>
<comment type="interaction">
    <interactant intactId="EBI-1051262">
        <id>Q9Y239</id>
    </interactant>
    <interactant intactId="EBI-2432309">
        <id>Q92876</id>
        <label>KLK6</label>
    </interactant>
    <organismsDiffer>false</organismsDiffer>
    <experiments>3</experiments>
</comment>
<comment type="interaction">
    <interactant intactId="EBI-1051262">
        <id>Q9Y239</id>
    </interactant>
    <interactant intactId="EBI-351935">
        <id>P02545</id>
        <label>LMNA</label>
    </interactant>
    <organismsDiffer>false</organismsDiffer>
    <experiments>3</experiments>
</comment>
<comment type="interaction">
    <interactant intactId="EBI-1051262">
        <id>Q9Y239</id>
    </interactant>
    <interactant intactId="EBI-1051262">
        <id>Q9Y239</id>
        <label>NOD1</label>
    </interactant>
    <organismsDiffer>false</organismsDiffer>
    <experiments>2</experiments>
</comment>
<comment type="interaction">
    <interactant intactId="EBI-1051262">
        <id>Q9Y239</id>
    </interactant>
    <interactant intactId="EBI-2804156">
        <id>Q6UX06</id>
        <label>OLFM4</label>
    </interactant>
    <organismsDiffer>false</organismsDiffer>
    <experiments>2</experiments>
</comment>
<comment type="interaction">
    <interactant intactId="EBI-1051262">
        <id>Q9Y239</id>
    </interactant>
    <interactant intactId="EBI-1307">
        <id>Q13153</id>
        <label>PAK1</label>
    </interactant>
    <organismsDiffer>false</organismsDiffer>
    <experiments>3</experiments>
</comment>
<comment type="interaction">
    <interactant intactId="EBI-1051262">
        <id>Q9Y239</id>
    </interactant>
    <interactant intactId="EBI-358522">
        <id>O43353</id>
        <label>RIPK2</label>
    </interactant>
    <organismsDiffer>false</organismsDiffer>
    <experiments>5</experiments>
</comment>
<comment type="interaction">
    <interactant intactId="EBI-1051262">
        <id>Q9Y239</id>
    </interactant>
    <interactant intactId="EBI-5235340">
        <id>Q7Z699</id>
        <label>SPRED1</label>
    </interactant>
    <organismsDiffer>false</organismsDiffer>
    <experiments>3</experiments>
</comment>
<comment type="interaction">
    <interactant intactId="EBI-1051262">
        <id>Q9Y239</id>
    </interactant>
    <interactant intactId="EBI-307008">
        <id>Q9Y2Z0</id>
        <label>SUGT1</label>
    </interactant>
    <organismsDiffer>false</organismsDiffer>
    <experiments>5</experiments>
</comment>
<comment type="interaction">
    <interactant intactId="EBI-1051262">
        <id>Q9Y239</id>
    </interactant>
    <interactant intactId="EBI-10689860">
        <id>A0A0H3NF38</id>
        <label>sspH2</label>
    </interactant>
    <organismsDiffer>true</organismsDiffer>
    <experiments>4</experiments>
</comment>
<comment type="subcellular location">
    <subcellularLocation>
        <location evidence="27">Cell membrane</location>
        <topology evidence="27">Lipid-anchor</topology>
    </subcellularLocation>
    <subcellularLocation>
        <location evidence="19">Apical cell membrane</location>
    </subcellularLocation>
    <subcellularLocation>
        <location evidence="19">Basolateral cell membrane</location>
    </subcellularLocation>
    <subcellularLocation>
        <location evidence="5 27">Cytoplasm</location>
    </subcellularLocation>
    <text evidence="19 27">Detected in the cytoplasm and at the cell membrane (PubMed:31649195). Following bacterial infection, localizes to bacterial entry sites in the cell membrane (PubMed:31649195). Recruited to the basolateral and apical membranes in polarized epithelial cells (PubMed:19043560).</text>
</comment>
<comment type="alternative products">
    <event type="alternative splicing"/>
    <isoform>
        <id>Q9Y239-1</id>
        <name>1</name>
        <name>Alpha</name>
        <sequence type="displayed"/>
    </isoform>
    <isoform>
        <id>Q9Y239-2</id>
        <name>2</name>
        <sequence type="described" ref="VSP_055825 VSP_055826"/>
    </isoform>
    <isoform>
        <id>Q9Y239-3</id>
        <name>3</name>
        <name>Beta</name>
        <name evidence="34">delta10</name>
        <sequence type="described" ref="VSP_061942"/>
    </isoform>
</comment>
<comment type="tissue specificity">
    <text evidence="4">Highly expressed in adult heart, skeletal muscle, pancreas, spleen and ovary (PubMed:10224040). Also detected in placenta, lung, liver, kidney, thymus, testis, small intestine and colon (PubMed:10224040).</text>
</comment>
<comment type="domain">
    <text evidence="13">The LRR repeats recognize and bind gamma-D-glutamyl-meso-diaminopimelic acid (iE-DAP).</text>
</comment>
<comment type="PTM">
    <text evidence="27">Palmitoylated. Palmitoylation is required for proper recruitment to the bacterial entry site and hence for proper signaling upon cognate peptidoglycan detection.</text>
</comment>
<comment type="PTM">
    <text evidence="22">Ubiquitinated. 'Lys-48'-linked polyubiquitination by RNF34 promotes proteasomal degradation and thereby negatively regulates NOD1 for instance in NF-kappa-B activation.</text>
</comment>
<comment type="PTM">
    <text evidence="30">Degraded via selective autophagy following interaction with IRGM (PubMed:36221902). IRGM promotes NOD1-RIPK2 RIPosome recruitment to autophagosome membranes, promoting their SQSTM1/p62-dependent autophagic degradation (PubMed:36221902).</text>
</comment>
<comment type="similarity">
    <text evidence="36">Belongs to the NOD1-NOD2 family.</text>
</comment>
<comment type="caution">
    <text evidence="14">Human and mouse NOD1 bind gamma-D-glutamyl-meso-diaminopimelic acid (iE-DAP) in a different context (PubMed:16211083). do not detect the same muropeptide from bacterial peptidoglycan: while human NOD1 detects a tripeptide-containing muropeptide (MurNAc-TriDAP or TriDAP), mouse Nod1 needs a tetrapeptide structure for efficient sensing (MurNAc-tetraDAP or TetraDAP) (PubMed:16211083).</text>
</comment>
<organism>
    <name type="scientific">Homo sapiens</name>
    <name type="common">Human</name>
    <dbReference type="NCBI Taxonomy" id="9606"/>
    <lineage>
        <taxon>Eukaryota</taxon>
        <taxon>Metazoa</taxon>
        <taxon>Chordata</taxon>
        <taxon>Craniata</taxon>
        <taxon>Vertebrata</taxon>
        <taxon>Euteleostomi</taxon>
        <taxon>Mammalia</taxon>
        <taxon>Eutheria</taxon>
        <taxon>Euarchontoglires</taxon>
        <taxon>Primates</taxon>
        <taxon>Haplorrhini</taxon>
        <taxon>Catarrhini</taxon>
        <taxon>Hominidae</taxon>
        <taxon>Homo</taxon>
    </lineage>
</organism>
<dbReference type="EMBL" id="AF126484">
    <property type="protein sequence ID" value="AAD29125.1"/>
    <property type="molecule type" value="mRNA"/>
</dbReference>
<dbReference type="EMBL" id="AF149774">
    <property type="protein sequence ID" value="AAD43922.1"/>
    <property type="molecule type" value="Genomic_DNA"/>
</dbReference>
<dbReference type="EMBL" id="AF113925">
    <property type="protein sequence ID" value="AAD28350.1"/>
    <property type="molecule type" value="mRNA"/>
</dbReference>
<dbReference type="EMBL" id="AK300367">
    <property type="protein sequence ID" value="BAG62105.1"/>
    <property type="molecule type" value="mRNA"/>
</dbReference>
<dbReference type="EMBL" id="AC005154">
    <property type="status" value="NOT_ANNOTATED_CDS"/>
    <property type="molecule type" value="Genomic_DNA"/>
</dbReference>
<dbReference type="EMBL" id="AC006027">
    <property type="protein sequence ID" value="AAS46897.1"/>
    <property type="molecule type" value="Genomic_DNA"/>
</dbReference>
<dbReference type="EMBL" id="BC040339">
    <property type="protein sequence ID" value="AAH40339.1"/>
    <property type="molecule type" value="mRNA"/>
</dbReference>
<dbReference type="CCDS" id="CCDS5427.1">
    <molecule id="Q9Y239-1"/>
</dbReference>
<dbReference type="RefSeq" id="NP_001341778.1">
    <molecule id="Q9Y239-3"/>
    <property type="nucleotide sequence ID" value="NM_001354849.2"/>
</dbReference>
<dbReference type="RefSeq" id="NP_006083.1">
    <molecule id="Q9Y239-1"/>
    <property type="nucleotide sequence ID" value="NM_006092.4"/>
</dbReference>
<dbReference type="RefSeq" id="XP_005249625.1">
    <molecule id="Q9Y239-1"/>
    <property type="nucleotide sequence ID" value="XM_005249568.2"/>
</dbReference>
<dbReference type="RefSeq" id="XP_005249629.1">
    <molecule id="Q9Y239-1"/>
    <property type="nucleotide sequence ID" value="XM_005249572.1"/>
</dbReference>
<dbReference type="RefSeq" id="XP_006715696.1">
    <molecule id="Q9Y239-1"/>
    <property type="nucleotide sequence ID" value="XM_006715633.3"/>
</dbReference>
<dbReference type="RefSeq" id="XP_011513381.1">
    <molecule id="Q9Y239-1"/>
    <property type="nucleotide sequence ID" value="XM_011515079.1"/>
</dbReference>
<dbReference type="RefSeq" id="XP_011513382.1">
    <property type="nucleotide sequence ID" value="XM_011515080.2"/>
</dbReference>
<dbReference type="RefSeq" id="XP_011513383.1">
    <property type="nucleotide sequence ID" value="XM_011515081.2"/>
</dbReference>
<dbReference type="RefSeq" id="XP_011513386.1">
    <molecule id="Q9Y239-3"/>
    <property type="nucleotide sequence ID" value="XM_011515084.2"/>
</dbReference>
<dbReference type="RefSeq" id="XP_016867164.1">
    <property type="nucleotide sequence ID" value="XM_017011675.1"/>
</dbReference>
<dbReference type="RefSeq" id="XP_047275708.1">
    <molecule id="Q9Y239-1"/>
    <property type="nucleotide sequence ID" value="XM_047419752.1"/>
</dbReference>
<dbReference type="RefSeq" id="XP_047275711.1">
    <molecule id="Q9Y239-3"/>
    <property type="nucleotide sequence ID" value="XM_047419755.1"/>
</dbReference>
<dbReference type="RefSeq" id="XP_047275712.1">
    <molecule id="Q9Y239-3"/>
    <property type="nucleotide sequence ID" value="XM_047419756.1"/>
</dbReference>
<dbReference type="RefSeq" id="XP_047275713.1">
    <molecule id="Q9Y239-3"/>
    <property type="nucleotide sequence ID" value="XM_047419757.1"/>
</dbReference>
<dbReference type="RefSeq" id="XP_047275714.1">
    <molecule id="Q9Y239-3"/>
    <property type="nucleotide sequence ID" value="XM_047419758.1"/>
</dbReference>
<dbReference type="RefSeq" id="XP_047275715.1">
    <molecule id="Q9Y239-3"/>
    <property type="nucleotide sequence ID" value="XM_047419759.1"/>
</dbReference>
<dbReference type="RefSeq" id="XP_047275716.1">
    <molecule id="Q9Y239-3"/>
    <property type="nucleotide sequence ID" value="XM_047419760.1"/>
</dbReference>
<dbReference type="RefSeq" id="XP_047275717.1">
    <molecule id="Q9Y239-3"/>
    <property type="nucleotide sequence ID" value="XM_047419761.1"/>
</dbReference>
<dbReference type="RefSeq" id="XP_054213027.1">
    <molecule id="Q9Y239-1"/>
    <property type="nucleotide sequence ID" value="XM_054357052.1"/>
</dbReference>
<dbReference type="RefSeq" id="XP_054213028.1">
    <molecule id="Q9Y239-1"/>
    <property type="nucleotide sequence ID" value="XM_054357053.1"/>
</dbReference>
<dbReference type="RefSeq" id="XP_054213029.1">
    <molecule id="Q9Y239-1"/>
    <property type="nucleotide sequence ID" value="XM_054357054.1"/>
</dbReference>
<dbReference type="RefSeq" id="XP_054213030.1">
    <molecule id="Q9Y239-1"/>
    <property type="nucleotide sequence ID" value="XM_054357055.1"/>
</dbReference>
<dbReference type="RefSeq" id="XP_054213031.1">
    <molecule id="Q9Y239-1"/>
    <property type="nucleotide sequence ID" value="XM_054357056.1"/>
</dbReference>
<dbReference type="RefSeq" id="XP_054213035.1">
    <molecule id="Q9Y239-3"/>
    <property type="nucleotide sequence ID" value="XM_054357060.1"/>
</dbReference>
<dbReference type="RefSeq" id="XP_054213036.1">
    <molecule id="Q9Y239-3"/>
    <property type="nucleotide sequence ID" value="XM_054357061.1"/>
</dbReference>
<dbReference type="RefSeq" id="XP_054213037.1">
    <molecule id="Q9Y239-3"/>
    <property type="nucleotide sequence ID" value="XM_054357062.1"/>
</dbReference>
<dbReference type="RefSeq" id="XP_054213038.1">
    <molecule id="Q9Y239-3"/>
    <property type="nucleotide sequence ID" value="XM_054357063.1"/>
</dbReference>
<dbReference type="RefSeq" id="XP_054213039.1">
    <molecule id="Q9Y239-3"/>
    <property type="nucleotide sequence ID" value="XM_054357064.1"/>
</dbReference>
<dbReference type="RefSeq" id="XP_054213040.1">
    <molecule id="Q9Y239-3"/>
    <property type="nucleotide sequence ID" value="XM_054357065.1"/>
</dbReference>
<dbReference type="RefSeq" id="XP_054213041.1">
    <molecule id="Q9Y239-3"/>
    <property type="nucleotide sequence ID" value="XM_054357066.1"/>
</dbReference>
<dbReference type="RefSeq" id="XP_054213042.1">
    <molecule id="Q9Y239-3"/>
    <property type="nucleotide sequence ID" value="XM_054357067.1"/>
</dbReference>
<dbReference type="PDB" id="2B1W">
    <property type="method" value="NMR"/>
    <property type="chains" value="A=15-138"/>
</dbReference>
<dbReference type="PDB" id="2DBD">
    <property type="method" value="NMR"/>
    <property type="chains" value="A=17-110"/>
</dbReference>
<dbReference type="PDB" id="2NSN">
    <property type="method" value="X-ray"/>
    <property type="resolution" value="2.00 A"/>
    <property type="chains" value="A=16-108"/>
</dbReference>
<dbReference type="PDB" id="2NZ7">
    <property type="method" value="X-ray"/>
    <property type="resolution" value="1.90 A"/>
    <property type="chains" value="A/B=9-106"/>
</dbReference>
<dbReference type="PDB" id="4E9M">
    <property type="method" value="X-ray"/>
    <property type="resolution" value="2.15 A"/>
    <property type="chains" value="A/B/C/D/E/F=2-138"/>
</dbReference>
<dbReference type="PDB" id="4JQW">
    <property type="method" value="X-ray"/>
    <property type="resolution" value="2.90 A"/>
    <property type="chains" value="A=16-108"/>
</dbReference>
<dbReference type="PDBsum" id="2B1W"/>
<dbReference type="PDBsum" id="2DBD"/>
<dbReference type="PDBsum" id="2NSN"/>
<dbReference type="PDBsum" id="2NZ7"/>
<dbReference type="PDBsum" id="4E9M"/>
<dbReference type="PDBsum" id="4JQW"/>
<dbReference type="BMRB" id="Q9Y239"/>
<dbReference type="SMR" id="Q9Y239"/>
<dbReference type="BioGRID" id="115664">
    <property type="interactions" value="34"/>
</dbReference>
<dbReference type="CORUM" id="Q9Y239"/>
<dbReference type="DIP" id="DIP-41064N"/>
<dbReference type="FunCoup" id="Q9Y239">
    <property type="interactions" value="584"/>
</dbReference>
<dbReference type="IntAct" id="Q9Y239">
    <property type="interactions" value="35"/>
</dbReference>
<dbReference type="MINT" id="Q9Y239"/>
<dbReference type="STRING" id="9606.ENSP00000222823"/>
<dbReference type="BindingDB" id="Q9Y239"/>
<dbReference type="ChEMBL" id="CHEMBL1293222"/>
<dbReference type="GuidetoPHARMACOLOGY" id="1762"/>
<dbReference type="GlyGen" id="Q9Y239">
    <property type="glycosylation" value="1 site, 1 O-linked glycan (1 site)"/>
</dbReference>
<dbReference type="iPTMnet" id="Q9Y239"/>
<dbReference type="PhosphoSitePlus" id="Q9Y239"/>
<dbReference type="SwissPalm" id="Q9Y239"/>
<dbReference type="BioMuta" id="NOD1"/>
<dbReference type="DMDM" id="20137579"/>
<dbReference type="jPOST" id="Q9Y239"/>
<dbReference type="MassIVE" id="Q9Y239"/>
<dbReference type="PaxDb" id="9606-ENSP00000222823"/>
<dbReference type="PeptideAtlas" id="Q9Y239"/>
<dbReference type="ProteomicsDB" id="5129"/>
<dbReference type="ProteomicsDB" id="85636">
    <molecule id="Q9Y239-1"/>
</dbReference>
<dbReference type="Antibodypedia" id="26181">
    <property type="antibodies" value="401 antibodies from 37 providers"/>
</dbReference>
<dbReference type="DNASU" id="10392"/>
<dbReference type="Ensembl" id="ENST00000222823.9">
    <molecule id="Q9Y239-1"/>
    <property type="protein sequence ID" value="ENSP00000222823.4"/>
    <property type="gene ID" value="ENSG00000106100.11"/>
</dbReference>
<dbReference type="GeneID" id="10392"/>
<dbReference type="KEGG" id="hsa:10392"/>
<dbReference type="MANE-Select" id="ENST00000222823.9">
    <property type="protein sequence ID" value="ENSP00000222823.4"/>
    <property type="RefSeq nucleotide sequence ID" value="NM_006092.4"/>
    <property type="RefSeq protein sequence ID" value="NP_006083.1"/>
</dbReference>
<dbReference type="UCSC" id="uc003tav.4">
    <molecule id="Q9Y239-1"/>
    <property type="organism name" value="human"/>
</dbReference>
<dbReference type="AGR" id="HGNC:16390"/>
<dbReference type="CTD" id="10392"/>
<dbReference type="DisGeNET" id="10392"/>
<dbReference type="GeneCards" id="NOD1"/>
<dbReference type="HGNC" id="HGNC:16390">
    <property type="gene designation" value="NOD1"/>
</dbReference>
<dbReference type="HPA" id="ENSG00000106100">
    <property type="expression patterns" value="Low tissue specificity"/>
</dbReference>
<dbReference type="MalaCards" id="NOD1"/>
<dbReference type="MIM" id="605980">
    <property type="type" value="gene"/>
</dbReference>
<dbReference type="neXtProt" id="NX_Q9Y239"/>
<dbReference type="OpenTargets" id="ENSG00000106100"/>
<dbReference type="PharmGKB" id="PA162398098"/>
<dbReference type="VEuPathDB" id="HostDB:ENSG00000106100"/>
<dbReference type="eggNOG" id="KOG4308">
    <property type="taxonomic scope" value="Eukaryota"/>
</dbReference>
<dbReference type="GeneTree" id="ENSGT00940000157845"/>
<dbReference type="HOGENOM" id="CLU_011291_1_0_1"/>
<dbReference type="InParanoid" id="Q9Y239"/>
<dbReference type="OMA" id="AHWGMEK"/>
<dbReference type="OrthoDB" id="120976at2759"/>
<dbReference type="PAN-GO" id="Q9Y239">
    <property type="GO annotations" value="1 GO annotation based on evolutionary models"/>
</dbReference>
<dbReference type="PhylomeDB" id="Q9Y239"/>
<dbReference type="TreeFam" id="TF352118"/>
<dbReference type="PathwayCommons" id="Q9Y239"/>
<dbReference type="Reactome" id="R-HSA-168638">
    <property type="pathway name" value="NOD1/2 Signaling Pathway"/>
</dbReference>
<dbReference type="Reactome" id="R-HSA-445989">
    <property type="pathway name" value="TAK1-dependent IKK and NF-kappa-B activation"/>
</dbReference>
<dbReference type="Reactome" id="R-HSA-450302">
    <property type="pathway name" value="activated TAK1 mediates p38 MAPK activation"/>
</dbReference>
<dbReference type="Reactome" id="R-HSA-450321">
    <property type="pathway name" value="JNK (c-Jun kinases) phosphorylation and activation mediated by activated human TAK1"/>
</dbReference>
<dbReference type="Reactome" id="R-HSA-5689896">
    <property type="pathway name" value="Ovarian tumor domain proteases"/>
</dbReference>
<dbReference type="Reactome" id="R-HSA-9020702">
    <property type="pathway name" value="Interleukin-1 signaling"/>
</dbReference>
<dbReference type="Reactome" id="R-HSA-9705671">
    <property type="pathway name" value="SARS-CoV-2 activates/modulates innate and adaptive immune responses"/>
</dbReference>
<dbReference type="SignaLink" id="Q9Y239"/>
<dbReference type="SIGNOR" id="Q9Y239"/>
<dbReference type="BioGRID-ORCS" id="10392">
    <property type="hits" value="10 hits in 1153 CRISPR screens"/>
</dbReference>
<dbReference type="ChiTaRS" id="NOD1">
    <property type="organism name" value="human"/>
</dbReference>
<dbReference type="EvolutionaryTrace" id="Q9Y239"/>
<dbReference type="GeneWiki" id="NOD1"/>
<dbReference type="GenomeRNAi" id="10392"/>
<dbReference type="Pharos" id="Q9Y239">
    <property type="development level" value="Tchem"/>
</dbReference>
<dbReference type="PRO" id="PR:Q9Y239"/>
<dbReference type="Proteomes" id="UP000005640">
    <property type="component" value="Chromosome 7"/>
</dbReference>
<dbReference type="RNAct" id="Q9Y239">
    <property type="molecule type" value="protein"/>
</dbReference>
<dbReference type="Bgee" id="ENSG00000106100">
    <property type="expression patterns" value="Expressed in sural nerve and 150 other cell types or tissues"/>
</dbReference>
<dbReference type="ExpressionAtlas" id="Q9Y239">
    <property type="expression patterns" value="baseline and differential"/>
</dbReference>
<dbReference type="GO" id="GO:0016324">
    <property type="term" value="C:apical plasma membrane"/>
    <property type="evidence" value="ECO:0007669"/>
    <property type="project" value="UniProtKB-SubCell"/>
</dbReference>
<dbReference type="GO" id="GO:0016323">
    <property type="term" value="C:basolateral plasma membrane"/>
    <property type="evidence" value="ECO:0000314"/>
    <property type="project" value="UniProtKB"/>
</dbReference>
<dbReference type="GO" id="GO:0005737">
    <property type="term" value="C:cytoplasm"/>
    <property type="evidence" value="ECO:0000314"/>
    <property type="project" value="MGI"/>
</dbReference>
<dbReference type="GO" id="GO:0005829">
    <property type="term" value="C:cytosol"/>
    <property type="evidence" value="ECO:0000314"/>
    <property type="project" value="UniProtKB"/>
</dbReference>
<dbReference type="GO" id="GO:0045335">
    <property type="term" value="C:phagocytic vesicle"/>
    <property type="evidence" value="ECO:0007669"/>
    <property type="project" value="Ensembl"/>
</dbReference>
<dbReference type="GO" id="GO:0005886">
    <property type="term" value="C:plasma membrane"/>
    <property type="evidence" value="ECO:0000314"/>
    <property type="project" value="UniProt"/>
</dbReference>
<dbReference type="GO" id="GO:0005524">
    <property type="term" value="F:ATP binding"/>
    <property type="evidence" value="ECO:0007669"/>
    <property type="project" value="UniProtKB-KW"/>
</dbReference>
<dbReference type="GO" id="GO:0050700">
    <property type="term" value="F:CARD domain binding"/>
    <property type="evidence" value="ECO:0000314"/>
    <property type="project" value="MGI"/>
</dbReference>
<dbReference type="GO" id="GO:0008656">
    <property type="term" value="F:cysteine-type endopeptidase activator activity involved in apoptotic process"/>
    <property type="evidence" value="ECO:0000304"/>
    <property type="project" value="ProtInc"/>
</dbReference>
<dbReference type="GO" id="GO:0042802">
    <property type="term" value="F:identical protein binding"/>
    <property type="evidence" value="ECO:0000314"/>
    <property type="project" value="MGI"/>
</dbReference>
<dbReference type="GO" id="GO:0038187">
    <property type="term" value="F:pattern recognition receptor activity"/>
    <property type="evidence" value="ECO:0000314"/>
    <property type="project" value="UniProtKB"/>
</dbReference>
<dbReference type="GO" id="GO:0042834">
    <property type="term" value="F:peptidoglycan binding"/>
    <property type="evidence" value="ECO:0000314"/>
    <property type="project" value="UniProtKB"/>
</dbReference>
<dbReference type="GO" id="GO:0042803">
    <property type="term" value="F:protein homodimerization activity"/>
    <property type="evidence" value="ECO:0000353"/>
    <property type="project" value="UniProtKB"/>
</dbReference>
<dbReference type="GO" id="GO:0044877">
    <property type="term" value="F:protein-containing complex binding"/>
    <property type="evidence" value="ECO:0000353"/>
    <property type="project" value="UniProtKB"/>
</dbReference>
<dbReference type="GO" id="GO:0043130">
    <property type="term" value="F:ubiquitin binding"/>
    <property type="evidence" value="ECO:0000314"/>
    <property type="project" value="UniProtKB"/>
</dbReference>
<dbReference type="GO" id="GO:0006915">
    <property type="term" value="P:apoptotic process"/>
    <property type="evidence" value="ECO:0000304"/>
    <property type="project" value="ProtInc"/>
</dbReference>
<dbReference type="GO" id="GO:0071225">
    <property type="term" value="P:cellular response to muramyl dipeptide"/>
    <property type="evidence" value="ECO:0000315"/>
    <property type="project" value="UniProtKB"/>
</dbReference>
<dbReference type="GO" id="GO:0006952">
    <property type="term" value="P:defense response"/>
    <property type="evidence" value="ECO:0000304"/>
    <property type="project" value="HGNC-UCL"/>
</dbReference>
<dbReference type="GO" id="GO:0042742">
    <property type="term" value="P:defense response to bacterium"/>
    <property type="evidence" value="ECO:0000314"/>
    <property type="project" value="HGNC-UCL"/>
</dbReference>
<dbReference type="GO" id="GO:0050829">
    <property type="term" value="P:defense response to Gram-negative bacterium"/>
    <property type="evidence" value="ECO:0000314"/>
    <property type="project" value="UniProtKB"/>
</dbReference>
<dbReference type="GO" id="GO:0050830">
    <property type="term" value="P:defense response to Gram-positive bacterium"/>
    <property type="evidence" value="ECO:0007669"/>
    <property type="project" value="Ensembl"/>
</dbReference>
<dbReference type="GO" id="GO:0016045">
    <property type="term" value="P:detection of bacterium"/>
    <property type="evidence" value="ECO:0000314"/>
    <property type="project" value="HGNC-UCL"/>
</dbReference>
<dbReference type="GO" id="GO:0009595">
    <property type="term" value="P:detection of biotic stimulus"/>
    <property type="evidence" value="ECO:0000304"/>
    <property type="project" value="HGNC-UCL"/>
</dbReference>
<dbReference type="GO" id="GO:0070371">
    <property type="term" value="P:ERK1 and ERK2 cascade"/>
    <property type="evidence" value="ECO:0007669"/>
    <property type="project" value="Ensembl"/>
</dbReference>
<dbReference type="GO" id="GO:0006954">
    <property type="term" value="P:inflammatory response"/>
    <property type="evidence" value="ECO:0000304"/>
    <property type="project" value="HGNC-UCL"/>
</dbReference>
<dbReference type="GO" id="GO:0045087">
    <property type="term" value="P:innate immune response"/>
    <property type="evidence" value="ECO:0007669"/>
    <property type="project" value="UniProtKB-KW"/>
</dbReference>
<dbReference type="GO" id="GO:0035556">
    <property type="term" value="P:intracellular signal transduction"/>
    <property type="evidence" value="ECO:0000314"/>
    <property type="project" value="HGNC-UCL"/>
</dbReference>
<dbReference type="GO" id="GO:0007254">
    <property type="term" value="P:JNK cascade"/>
    <property type="evidence" value="ECO:0007669"/>
    <property type="project" value="Ensembl"/>
</dbReference>
<dbReference type="GO" id="GO:0070427">
    <property type="term" value="P:nucleotide-binding oligomerization domain containing 1 signaling pathway"/>
    <property type="evidence" value="ECO:0000314"/>
    <property type="project" value="UniProtKB"/>
</dbReference>
<dbReference type="GO" id="GO:0002221">
    <property type="term" value="P:pattern recognition receptor signaling pathway"/>
    <property type="evidence" value="ECO:0000314"/>
    <property type="project" value="UniProtKB"/>
</dbReference>
<dbReference type="GO" id="GO:0043065">
    <property type="term" value="P:positive regulation of apoptotic process"/>
    <property type="evidence" value="ECO:0007669"/>
    <property type="project" value="Ensembl"/>
</dbReference>
<dbReference type="GO" id="GO:0043123">
    <property type="term" value="P:positive regulation of canonical NF-kappaB signal transduction"/>
    <property type="evidence" value="ECO:0000314"/>
    <property type="project" value="UniProtKB"/>
</dbReference>
<dbReference type="GO" id="GO:0002606">
    <property type="term" value="P:positive regulation of dendritic cell antigen processing and presentation"/>
    <property type="evidence" value="ECO:0000250"/>
    <property type="project" value="BHF-UCL"/>
</dbReference>
<dbReference type="GO" id="GO:0070374">
    <property type="term" value="P:positive regulation of ERK1 and ERK2 cascade"/>
    <property type="evidence" value="ECO:0007669"/>
    <property type="project" value="Ensembl"/>
</dbReference>
<dbReference type="GO" id="GO:0032731">
    <property type="term" value="P:positive regulation of interleukin-1 beta production"/>
    <property type="evidence" value="ECO:0007669"/>
    <property type="project" value="Ensembl"/>
</dbReference>
<dbReference type="GO" id="GO:0032755">
    <property type="term" value="P:positive regulation of interleukin-6 production"/>
    <property type="evidence" value="ECO:0007669"/>
    <property type="project" value="Ensembl"/>
</dbReference>
<dbReference type="GO" id="GO:0032757">
    <property type="term" value="P:positive regulation of interleukin-8 production"/>
    <property type="evidence" value="ECO:0000314"/>
    <property type="project" value="HGNC-UCL"/>
</dbReference>
<dbReference type="GO" id="GO:0046330">
    <property type="term" value="P:positive regulation of JNK cascade"/>
    <property type="evidence" value="ECO:0007669"/>
    <property type="project" value="Ensembl"/>
</dbReference>
<dbReference type="GO" id="GO:0060907">
    <property type="term" value="P:positive regulation of macrophage cytokine production"/>
    <property type="evidence" value="ECO:0007669"/>
    <property type="project" value="Ensembl"/>
</dbReference>
<dbReference type="GO" id="GO:0051092">
    <property type="term" value="P:positive regulation of NF-kappaB transcription factor activity"/>
    <property type="evidence" value="ECO:0000314"/>
    <property type="project" value="UniProtKB"/>
</dbReference>
<dbReference type="GO" id="GO:1901224">
    <property type="term" value="P:positive regulation of non-canonical NF-kappaB signal transduction"/>
    <property type="evidence" value="ECO:0000315"/>
    <property type="project" value="UniProtKB"/>
</dbReference>
<dbReference type="GO" id="GO:0032874">
    <property type="term" value="P:positive regulation of stress-activated MAPK cascade"/>
    <property type="evidence" value="ECO:0007669"/>
    <property type="project" value="Ensembl"/>
</dbReference>
<dbReference type="GO" id="GO:0032760">
    <property type="term" value="P:positive regulation of tumor necrosis factor production"/>
    <property type="evidence" value="ECO:0007669"/>
    <property type="project" value="Ensembl"/>
</dbReference>
<dbReference type="GO" id="GO:1904417">
    <property type="term" value="P:positive regulation of xenophagy"/>
    <property type="evidence" value="ECO:0007669"/>
    <property type="project" value="Ensembl"/>
</dbReference>
<dbReference type="GO" id="GO:0034976">
    <property type="term" value="P:response to endoplasmic reticulum stress"/>
    <property type="evidence" value="ECO:0007669"/>
    <property type="project" value="Ensembl"/>
</dbReference>
<dbReference type="GO" id="GO:0007165">
    <property type="term" value="P:signal transduction"/>
    <property type="evidence" value="ECO:0000304"/>
    <property type="project" value="HGNC-UCL"/>
</dbReference>
<dbReference type="GO" id="GO:0051403">
    <property type="term" value="P:stress-activated MAPK cascade"/>
    <property type="evidence" value="ECO:0007669"/>
    <property type="project" value="Ensembl"/>
</dbReference>
<dbReference type="GO" id="GO:0098792">
    <property type="term" value="P:xenophagy"/>
    <property type="evidence" value="ECO:0007669"/>
    <property type="project" value="Ensembl"/>
</dbReference>
<dbReference type="CDD" id="cd08324">
    <property type="entry name" value="CARD_NOD1_CARD4"/>
    <property type="match status" value="1"/>
</dbReference>
<dbReference type="DisProt" id="DP01446"/>
<dbReference type="FunFam" id="3.40.50.300:FF:001074">
    <property type="entry name" value="Nucleotide binding oligomerization domain containing 1"/>
    <property type="match status" value="1"/>
</dbReference>
<dbReference type="FunFam" id="1.10.533.10:FF:000047">
    <property type="entry name" value="Nucleotide-binding oligomerization domain-containing protein 1"/>
    <property type="match status" value="1"/>
</dbReference>
<dbReference type="FunFam" id="3.80.10.10:FF:000282">
    <property type="entry name" value="Nucleotide-binding oligomerization domain-containing protein 1"/>
    <property type="match status" value="1"/>
</dbReference>
<dbReference type="FunFam" id="3.80.10.10:FF:000254">
    <property type="entry name" value="nucleotide-binding oligomerization domain-containing protein 1"/>
    <property type="match status" value="1"/>
</dbReference>
<dbReference type="Gene3D" id="1.10.533.10">
    <property type="entry name" value="Death Domain, Fas"/>
    <property type="match status" value="1"/>
</dbReference>
<dbReference type="Gene3D" id="3.40.50.300">
    <property type="entry name" value="P-loop containing nucleotide triphosphate hydrolases"/>
    <property type="match status" value="1"/>
</dbReference>
<dbReference type="Gene3D" id="3.80.10.10">
    <property type="entry name" value="Ribonuclease Inhibitor"/>
    <property type="match status" value="2"/>
</dbReference>
<dbReference type="InterPro" id="IPR001315">
    <property type="entry name" value="CARD"/>
</dbReference>
<dbReference type="InterPro" id="IPR011029">
    <property type="entry name" value="DEATH-like_dom_sf"/>
</dbReference>
<dbReference type="InterPro" id="IPR001611">
    <property type="entry name" value="Leu-rich_rpt"/>
</dbReference>
<dbReference type="InterPro" id="IPR032675">
    <property type="entry name" value="LRR_dom_sf"/>
</dbReference>
<dbReference type="InterPro" id="IPR007111">
    <property type="entry name" value="NACHT_NTPase"/>
</dbReference>
<dbReference type="InterPro" id="IPR051261">
    <property type="entry name" value="NLR"/>
</dbReference>
<dbReference type="InterPro" id="IPR041267">
    <property type="entry name" value="NLRP_HD2"/>
</dbReference>
<dbReference type="InterPro" id="IPR041075">
    <property type="entry name" value="NOD1/2_WH"/>
</dbReference>
<dbReference type="InterPro" id="IPR027417">
    <property type="entry name" value="P-loop_NTPase"/>
</dbReference>
<dbReference type="PANTHER" id="PTHR24106">
    <property type="entry name" value="NACHT, LRR AND CARD DOMAINS-CONTAINING"/>
    <property type="match status" value="1"/>
</dbReference>
<dbReference type="Pfam" id="PF00619">
    <property type="entry name" value="CARD"/>
    <property type="match status" value="1"/>
</dbReference>
<dbReference type="Pfam" id="PF13516">
    <property type="entry name" value="LRR_6"/>
    <property type="match status" value="4"/>
</dbReference>
<dbReference type="Pfam" id="PF05729">
    <property type="entry name" value="NACHT"/>
    <property type="match status" value="1"/>
</dbReference>
<dbReference type="Pfam" id="PF17776">
    <property type="entry name" value="NLRC4_HD2"/>
    <property type="match status" value="1"/>
</dbReference>
<dbReference type="Pfam" id="PF17779">
    <property type="entry name" value="NOD2_WH"/>
    <property type="match status" value="1"/>
</dbReference>
<dbReference type="SMART" id="SM00368">
    <property type="entry name" value="LRR_RI"/>
    <property type="match status" value="7"/>
</dbReference>
<dbReference type="SUPFAM" id="SSF47986">
    <property type="entry name" value="DEATH domain"/>
    <property type="match status" value="1"/>
</dbReference>
<dbReference type="SUPFAM" id="SSF52047">
    <property type="entry name" value="RNI-like"/>
    <property type="match status" value="1"/>
</dbReference>
<dbReference type="PROSITE" id="PS50209">
    <property type="entry name" value="CARD"/>
    <property type="match status" value="1"/>
</dbReference>
<dbReference type="PROSITE" id="PS50837">
    <property type="entry name" value="NACHT"/>
    <property type="match status" value="1"/>
</dbReference>
<protein>
    <recommendedName>
        <fullName evidence="32">Nucleotide-binding oligomerization domain-containing protein 1</fullName>
        <shortName evidence="35">hNod1</shortName>
    </recommendedName>
    <alternativeName>
        <fullName evidence="31">Caspase recruitment domain-containing protein 4</fullName>
    </alternativeName>
</protein>
<name>NOD1_HUMAN</name>